<organism>
    <name type="scientific">Salmonella typhimurium (strain LT2 / SGSC1412 / ATCC 700720)</name>
    <dbReference type="NCBI Taxonomy" id="99287"/>
    <lineage>
        <taxon>Bacteria</taxon>
        <taxon>Pseudomonadati</taxon>
        <taxon>Pseudomonadota</taxon>
        <taxon>Gammaproteobacteria</taxon>
        <taxon>Enterobacterales</taxon>
        <taxon>Enterobacteriaceae</taxon>
        <taxon>Salmonella</taxon>
    </lineage>
</organism>
<comment type="function">
    <text>This protein is involved in the repair of mismatches in DNA. It is required for dam-dependent methyl-directed DNA mismatch repair. May act as a 'molecular matchmaker', a protein that promotes the formation of a stable complex between two or more DNA-binding proteins in an ATP-dependent manner without itself being part of a final effector complex.</text>
</comment>
<comment type="similarity">
    <text evidence="2">Belongs to the DNA mismatch repair MutL/HexB family.</text>
</comment>
<reference key="1">
    <citation type="journal article" date="1989" name="J. Bacteriol.">
        <title>Nucleotide sequence of the Salmonella typhimurium mutL gene required for mismatch repair: homology of MutL to HexB of Streptococcus pneumoniae and to PMS1 of the yeast Saccharomyces cerevisiae.</title>
        <authorList>
            <person name="Mankovich J.A."/>
            <person name="McIntyre C.A."/>
            <person name="Walker G.C."/>
        </authorList>
    </citation>
    <scope>NUCLEOTIDE SEQUENCE [GENOMIC DNA]</scope>
    <source>
        <strain>LT2</strain>
    </source>
</reference>
<reference key="2">
    <citation type="journal article" date="2001" name="Nature">
        <title>Complete genome sequence of Salmonella enterica serovar Typhimurium LT2.</title>
        <authorList>
            <person name="McClelland M."/>
            <person name="Sanderson K.E."/>
            <person name="Spieth J."/>
            <person name="Clifton S.W."/>
            <person name="Latreille P."/>
            <person name="Courtney L."/>
            <person name="Porwollik S."/>
            <person name="Ali J."/>
            <person name="Dante M."/>
            <person name="Du F."/>
            <person name="Hou S."/>
            <person name="Layman D."/>
            <person name="Leonard S."/>
            <person name="Nguyen C."/>
            <person name="Scott K."/>
            <person name="Holmes A."/>
            <person name="Grewal N."/>
            <person name="Mulvaney E."/>
            <person name="Ryan E."/>
            <person name="Sun H."/>
            <person name="Florea L."/>
            <person name="Miller W."/>
            <person name="Stoneking T."/>
            <person name="Nhan M."/>
            <person name="Waterston R."/>
            <person name="Wilson R.K."/>
        </authorList>
    </citation>
    <scope>NUCLEOTIDE SEQUENCE [LARGE SCALE GENOMIC DNA]</scope>
    <source>
        <strain>LT2 / SGSC1412 / ATCC 700720</strain>
    </source>
</reference>
<accession>P14161</accession>
<keyword id="KW-0227">DNA damage</keyword>
<keyword id="KW-0234">DNA repair</keyword>
<keyword id="KW-1185">Reference proteome</keyword>
<sequence length="618" mass="67762">MPIQVLPPQLANQIAAGEVVERPASVVKELVENSLDAGATRVDIDIERGGAKLIRIRDNGCGIKKEELALALARHATSKIASLDDLEAIISLGFRGEALASISSVSRLTLTSRTAEQAEAWQAYAEGRDMDVTVKPAAHPVGTTLEVLDLFYNTPARRKFMRTEKTEFNHIDEIIRRIALARFDVTLNLSHNGKLVRQYRAVAKDGQKERRLGAICGTPFLEQALAIEWQHGDLTLRGWVADPNHTTTALTEIQYCYVNGRMMRDRLINHAIRQACEDKLGADQQPAFVLYLEIDPHQVDVNVHPAKHEVRFHQSRLVHDFIYQGVLSVLQQQTETALPLEEIAPAPRHVQENRIAAGRNHFAVPAEPTAAREPATPRYSGGASGGNGGRQSAGGWPHAQPGYQKQQGEVYRTLLQTPTASPAPESVTPALDGHSQSFGRVLTIVGGDCALLEHAGTIQLLSLPVAERWLRQAQLTPGQSPVCAQPLLIPLRLKVSADEKAALQKAQSLLGELGIEFQSDAQHVTIRAVPLPLRQQNLQILIPELIGYLAQQTTFATVNIAQWIARNVQSEHPQWSMAQAISLLADVERLCPQLVKAPPGGLLQPVDLHSAMNALKHE</sequence>
<protein>
    <recommendedName>
        <fullName>DNA mismatch repair protein MutL</fullName>
    </recommendedName>
</protein>
<feature type="chain" id="PRO_0000177967" description="DNA mismatch repair protein MutL">
    <location>
        <begin position="1"/>
        <end position="618"/>
    </location>
</feature>
<feature type="region of interest" description="Disordered" evidence="1">
    <location>
        <begin position="366"/>
        <end position="403"/>
    </location>
</feature>
<feature type="compositionally biased region" description="Low complexity" evidence="1">
    <location>
        <begin position="366"/>
        <end position="381"/>
    </location>
</feature>
<feature type="compositionally biased region" description="Gly residues" evidence="1">
    <location>
        <begin position="382"/>
        <end position="392"/>
    </location>
</feature>
<dbReference type="EMBL" id="M29687">
    <property type="protein sequence ID" value="AAA27166.1"/>
    <property type="molecule type" value="Genomic_DNA"/>
</dbReference>
<dbReference type="EMBL" id="AE006468">
    <property type="protein sequence ID" value="AAL23179.1"/>
    <property type="molecule type" value="Genomic_DNA"/>
</dbReference>
<dbReference type="PIR" id="A33588">
    <property type="entry name" value="A33588"/>
</dbReference>
<dbReference type="RefSeq" id="NP_463220.1">
    <property type="nucleotide sequence ID" value="NC_003197.2"/>
</dbReference>
<dbReference type="RefSeq" id="WP_001122538.1">
    <property type="nucleotide sequence ID" value="NC_003197.2"/>
</dbReference>
<dbReference type="SMR" id="P14161"/>
<dbReference type="STRING" id="99287.STM4359"/>
<dbReference type="PaxDb" id="99287-STM4359"/>
<dbReference type="GeneID" id="1255885"/>
<dbReference type="KEGG" id="stm:STM4359"/>
<dbReference type="PATRIC" id="fig|99287.12.peg.4583"/>
<dbReference type="HOGENOM" id="CLU_004131_5_1_6"/>
<dbReference type="PhylomeDB" id="P14161"/>
<dbReference type="BioCyc" id="SENT99287:STM4359-MONOMER"/>
<dbReference type="Proteomes" id="UP000001014">
    <property type="component" value="Chromosome"/>
</dbReference>
<dbReference type="GO" id="GO:0032300">
    <property type="term" value="C:mismatch repair complex"/>
    <property type="evidence" value="ECO:0000318"/>
    <property type="project" value="GO_Central"/>
</dbReference>
<dbReference type="GO" id="GO:0005524">
    <property type="term" value="F:ATP binding"/>
    <property type="evidence" value="ECO:0007669"/>
    <property type="project" value="InterPro"/>
</dbReference>
<dbReference type="GO" id="GO:0016887">
    <property type="term" value="F:ATP hydrolysis activity"/>
    <property type="evidence" value="ECO:0000318"/>
    <property type="project" value="GO_Central"/>
</dbReference>
<dbReference type="GO" id="GO:0140664">
    <property type="term" value="F:ATP-dependent DNA damage sensor activity"/>
    <property type="evidence" value="ECO:0007669"/>
    <property type="project" value="InterPro"/>
</dbReference>
<dbReference type="GO" id="GO:0030983">
    <property type="term" value="F:mismatched DNA binding"/>
    <property type="evidence" value="ECO:0007669"/>
    <property type="project" value="InterPro"/>
</dbReference>
<dbReference type="GO" id="GO:0006298">
    <property type="term" value="P:mismatch repair"/>
    <property type="evidence" value="ECO:0000318"/>
    <property type="project" value="GO_Central"/>
</dbReference>
<dbReference type="CDD" id="cd16926">
    <property type="entry name" value="HATPase_MutL-MLH-PMS-like"/>
    <property type="match status" value="1"/>
</dbReference>
<dbReference type="CDD" id="cd03482">
    <property type="entry name" value="MutL_Trans_MutL"/>
    <property type="match status" value="1"/>
</dbReference>
<dbReference type="FunFam" id="3.30.230.10:FF:000013">
    <property type="entry name" value="DNA mismatch repair endonuclease MutL"/>
    <property type="match status" value="1"/>
</dbReference>
<dbReference type="FunFam" id="3.30.565.10:FF:000003">
    <property type="entry name" value="DNA mismatch repair endonuclease MutL"/>
    <property type="match status" value="1"/>
</dbReference>
<dbReference type="FunFam" id="3.30.1370.100:FF:000002">
    <property type="entry name" value="DNA mismatch repair protein MutL"/>
    <property type="match status" value="1"/>
</dbReference>
<dbReference type="Gene3D" id="3.30.230.10">
    <property type="match status" value="1"/>
</dbReference>
<dbReference type="Gene3D" id="3.30.565.10">
    <property type="entry name" value="Histidine kinase-like ATPase, C-terminal domain"/>
    <property type="match status" value="1"/>
</dbReference>
<dbReference type="Gene3D" id="3.30.1540.20">
    <property type="entry name" value="MutL, C-terminal domain, dimerisation subdomain"/>
    <property type="match status" value="1"/>
</dbReference>
<dbReference type="Gene3D" id="3.30.1370.100">
    <property type="entry name" value="MutL, C-terminal domain, regulatory subdomain"/>
    <property type="match status" value="1"/>
</dbReference>
<dbReference type="HAMAP" id="MF_00149">
    <property type="entry name" value="DNA_mis_repair"/>
    <property type="match status" value="1"/>
</dbReference>
<dbReference type="InterPro" id="IPR014762">
    <property type="entry name" value="DNA_mismatch_repair_CS"/>
</dbReference>
<dbReference type="InterPro" id="IPR020667">
    <property type="entry name" value="DNA_mismatch_repair_MutL"/>
</dbReference>
<dbReference type="InterPro" id="IPR013507">
    <property type="entry name" value="DNA_mismatch_S5_2-like"/>
</dbReference>
<dbReference type="InterPro" id="IPR036890">
    <property type="entry name" value="HATPase_C_sf"/>
</dbReference>
<dbReference type="InterPro" id="IPR002099">
    <property type="entry name" value="MutL/Mlh/PMS"/>
</dbReference>
<dbReference type="InterPro" id="IPR038973">
    <property type="entry name" value="MutL/Mlh/Pms-like"/>
</dbReference>
<dbReference type="InterPro" id="IPR014790">
    <property type="entry name" value="MutL_C"/>
</dbReference>
<dbReference type="InterPro" id="IPR042120">
    <property type="entry name" value="MutL_C_dimsub"/>
</dbReference>
<dbReference type="InterPro" id="IPR042121">
    <property type="entry name" value="MutL_C_regsub"/>
</dbReference>
<dbReference type="InterPro" id="IPR037198">
    <property type="entry name" value="MutL_C_sf"/>
</dbReference>
<dbReference type="InterPro" id="IPR020568">
    <property type="entry name" value="Ribosomal_Su5_D2-typ_SF"/>
</dbReference>
<dbReference type="InterPro" id="IPR014721">
    <property type="entry name" value="Ribsml_uS5_D2-typ_fold_subgr"/>
</dbReference>
<dbReference type="NCBIfam" id="TIGR00585">
    <property type="entry name" value="mutl"/>
    <property type="match status" value="1"/>
</dbReference>
<dbReference type="NCBIfam" id="NF000948">
    <property type="entry name" value="PRK00095.1-1"/>
    <property type="match status" value="1"/>
</dbReference>
<dbReference type="PANTHER" id="PTHR10073">
    <property type="entry name" value="DNA MISMATCH REPAIR PROTEIN MLH, PMS, MUTL"/>
    <property type="match status" value="1"/>
</dbReference>
<dbReference type="PANTHER" id="PTHR10073:SF12">
    <property type="entry name" value="DNA MISMATCH REPAIR PROTEIN MLH1"/>
    <property type="match status" value="1"/>
</dbReference>
<dbReference type="Pfam" id="PF01119">
    <property type="entry name" value="DNA_mis_repair"/>
    <property type="match status" value="1"/>
</dbReference>
<dbReference type="Pfam" id="PF13589">
    <property type="entry name" value="HATPase_c_3"/>
    <property type="match status" value="1"/>
</dbReference>
<dbReference type="Pfam" id="PF08676">
    <property type="entry name" value="MutL_C"/>
    <property type="match status" value="1"/>
</dbReference>
<dbReference type="SMART" id="SM01340">
    <property type="entry name" value="DNA_mis_repair"/>
    <property type="match status" value="1"/>
</dbReference>
<dbReference type="SMART" id="SM00853">
    <property type="entry name" value="MutL_C"/>
    <property type="match status" value="1"/>
</dbReference>
<dbReference type="SUPFAM" id="SSF55874">
    <property type="entry name" value="ATPase domain of HSP90 chaperone/DNA topoisomerase II/histidine kinase"/>
    <property type="match status" value="1"/>
</dbReference>
<dbReference type="SUPFAM" id="SSF118116">
    <property type="entry name" value="DNA mismatch repair protein MutL"/>
    <property type="match status" value="1"/>
</dbReference>
<dbReference type="SUPFAM" id="SSF54211">
    <property type="entry name" value="Ribosomal protein S5 domain 2-like"/>
    <property type="match status" value="1"/>
</dbReference>
<dbReference type="PROSITE" id="PS00058">
    <property type="entry name" value="DNA_MISMATCH_REPAIR_1"/>
    <property type="match status" value="1"/>
</dbReference>
<evidence type="ECO:0000256" key="1">
    <source>
        <dbReference type="SAM" id="MobiDB-lite"/>
    </source>
</evidence>
<evidence type="ECO:0000305" key="2"/>
<name>MUTL_SALTY</name>
<gene>
    <name type="primary">mutL</name>
    <name type="ordered locus">STM4359</name>
</gene>
<proteinExistence type="inferred from homology"/>